<organism>
    <name type="scientific">Bacillus subtilis (strain 168)</name>
    <dbReference type="NCBI Taxonomy" id="224308"/>
    <lineage>
        <taxon>Bacteria</taxon>
        <taxon>Bacillati</taxon>
        <taxon>Bacillota</taxon>
        <taxon>Bacilli</taxon>
        <taxon>Bacillales</taxon>
        <taxon>Bacillaceae</taxon>
        <taxon>Bacillus</taxon>
    </lineage>
</organism>
<dbReference type="EMBL" id="AF027868">
    <property type="protein sequence ID" value="AAB84474.1"/>
    <property type="molecule type" value="Genomic_DNA"/>
</dbReference>
<dbReference type="EMBL" id="AL009126">
    <property type="protein sequence ID" value="CAB13813.1"/>
    <property type="molecule type" value="Genomic_DNA"/>
</dbReference>
<dbReference type="PIR" id="E69901">
    <property type="entry name" value="E69901"/>
</dbReference>
<dbReference type="RefSeq" id="WP_003231267.1">
    <property type="nucleotide sequence ID" value="NZ_OZ025638.1"/>
</dbReference>
<dbReference type="SMR" id="O34669"/>
<dbReference type="FunCoup" id="O34669">
    <property type="interactions" value="3"/>
</dbReference>
<dbReference type="STRING" id="224308.BSU19210"/>
<dbReference type="CAZy" id="CBM50">
    <property type="family name" value="Carbohydrate-Binding Module Family 50"/>
</dbReference>
<dbReference type="PaxDb" id="224308-BSU19210"/>
<dbReference type="EnsemblBacteria" id="CAB13813">
    <property type="protein sequence ID" value="CAB13813"/>
    <property type="gene ID" value="BSU_19210"/>
</dbReference>
<dbReference type="GeneID" id="939673"/>
<dbReference type="KEGG" id="bsu:BSU19210"/>
<dbReference type="PATRIC" id="fig|224308.179.peg.2099"/>
<dbReference type="eggNOG" id="COG1388">
    <property type="taxonomic scope" value="Bacteria"/>
</dbReference>
<dbReference type="eggNOG" id="COG3584">
    <property type="taxonomic scope" value="Bacteria"/>
</dbReference>
<dbReference type="InParanoid" id="O34669"/>
<dbReference type="OrthoDB" id="9798935at2"/>
<dbReference type="PhylomeDB" id="O34669"/>
<dbReference type="BioCyc" id="BSUB:BSU19210-MONOMER"/>
<dbReference type="Proteomes" id="UP000001570">
    <property type="component" value="Chromosome"/>
</dbReference>
<dbReference type="GO" id="GO:0005576">
    <property type="term" value="C:extracellular region"/>
    <property type="evidence" value="ECO:0007669"/>
    <property type="project" value="UniProtKB-KW"/>
</dbReference>
<dbReference type="GO" id="GO:0019867">
    <property type="term" value="C:outer membrane"/>
    <property type="evidence" value="ECO:0007669"/>
    <property type="project" value="InterPro"/>
</dbReference>
<dbReference type="GO" id="GO:0004553">
    <property type="term" value="F:hydrolase activity, hydrolyzing O-glycosyl compounds"/>
    <property type="evidence" value="ECO:0007669"/>
    <property type="project" value="InterPro"/>
</dbReference>
<dbReference type="GO" id="GO:0009254">
    <property type="term" value="P:peptidoglycan turnover"/>
    <property type="evidence" value="ECO:0007669"/>
    <property type="project" value="InterPro"/>
</dbReference>
<dbReference type="CDD" id="cd22786">
    <property type="entry name" value="DPBB_YuiC-like"/>
    <property type="match status" value="1"/>
</dbReference>
<dbReference type="CDD" id="cd00118">
    <property type="entry name" value="LysM"/>
    <property type="match status" value="2"/>
</dbReference>
<dbReference type="Gene3D" id="3.10.350.10">
    <property type="entry name" value="LysM domain"/>
    <property type="match status" value="2"/>
</dbReference>
<dbReference type="Gene3D" id="2.40.40.10">
    <property type="entry name" value="RlpA-like domain"/>
    <property type="match status" value="1"/>
</dbReference>
<dbReference type="InterPro" id="IPR010611">
    <property type="entry name" value="3D_dom"/>
</dbReference>
<dbReference type="InterPro" id="IPR018392">
    <property type="entry name" value="LysM_dom"/>
</dbReference>
<dbReference type="InterPro" id="IPR036779">
    <property type="entry name" value="LysM_dom_sf"/>
</dbReference>
<dbReference type="InterPro" id="IPR051933">
    <property type="entry name" value="Resuscitation_pf_RpfB"/>
</dbReference>
<dbReference type="InterPro" id="IPR036908">
    <property type="entry name" value="RlpA-like_sf"/>
</dbReference>
<dbReference type="PANTHER" id="PTHR39160">
    <property type="entry name" value="CELL WALL-BINDING PROTEIN YOCH"/>
    <property type="match status" value="1"/>
</dbReference>
<dbReference type="PANTHER" id="PTHR39160:SF6">
    <property type="entry name" value="CELL WALL-BINDING PROTEIN YOCH"/>
    <property type="match status" value="1"/>
</dbReference>
<dbReference type="Pfam" id="PF06725">
    <property type="entry name" value="3D"/>
    <property type="match status" value="1"/>
</dbReference>
<dbReference type="Pfam" id="PF01476">
    <property type="entry name" value="LysM"/>
    <property type="match status" value="2"/>
</dbReference>
<dbReference type="SMART" id="SM00257">
    <property type="entry name" value="LysM"/>
    <property type="match status" value="2"/>
</dbReference>
<dbReference type="SUPFAM" id="SSF50685">
    <property type="entry name" value="Barwin-like endoglucanases"/>
    <property type="match status" value="1"/>
</dbReference>
<dbReference type="SUPFAM" id="SSF54106">
    <property type="entry name" value="LysM domain"/>
    <property type="match status" value="2"/>
</dbReference>
<dbReference type="PROSITE" id="PS51782">
    <property type="entry name" value="LYSM"/>
    <property type="match status" value="2"/>
</dbReference>
<name>YOCH_BACSU</name>
<proteinExistence type="evidence at protein level"/>
<reference key="1">
    <citation type="submission" date="1997-11" db="EMBL/GenBank/DDBJ databases">
        <title>Sequence analysis of the Bacillus subtilis chromosome region between the terC and odhAB loci cloned in a yeast artificial chromosome.</title>
        <authorList>
            <person name="Lapidus A."/>
            <person name="Galleron N."/>
            <person name="Sorokin A."/>
            <person name="Ehrlich S.D."/>
        </authorList>
    </citation>
    <scope>NUCLEOTIDE SEQUENCE [GENOMIC DNA]</scope>
</reference>
<reference key="2">
    <citation type="journal article" date="1997" name="Nature">
        <title>The complete genome sequence of the Gram-positive bacterium Bacillus subtilis.</title>
        <authorList>
            <person name="Kunst F."/>
            <person name="Ogasawara N."/>
            <person name="Moszer I."/>
            <person name="Albertini A.M."/>
            <person name="Alloni G."/>
            <person name="Azevedo V."/>
            <person name="Bertero M.G."/>
            <person name="Bessieres P."/>
            <person name="Bolotin A."/>
            <person name="Borchert S."/>
            <person name="Borriss R."/>
            <person name="Boursier L."/>
            <person name="Brans A."/>
            <person name="Braun M."/>
            <person name="Brignell S.C."/>
            <person name="Bron S."/>
            <person name="Brouillet S."/>
            <person name="Bruschi C.V."/>
            <person name="Caldwell B."/>
            <person name="Capuano V."/>
            <person name="Carter N.M."/>
            <person name="Choi S.-K."/>
            <person name="Codani J.-J."/>
            <person name="Connerton I.F."/>
            <person name="Cummings N.J."/>
            <person name="Daniel R.A."/>
            <person name="Denizot F."/>
            <person name="Devine K.M."/>
            <person name="Duesterhoeft A."/>
            <person name="Ehrlich S.D."/>
            <person name="Emmerson P.T."/>
            <person name="Entian K.-D."/>
            <person name="Errington J."/>
            <person name="Fabret C."/>
            <person name="Ferrari E."/>
            <person name="Foulger D."/>
            <person name="Fritz C."/>
            <person name="Fujita M."/>
            <person name="Fujita Y."/>
            <person name="Fuma S."/>
            <person name="Galizzi A."/>
            <person name="Galleron N."/>
            <person name="Ghim S.-Y."/>
            <person name="Glaser P."/>
            <person name="Goffeau A."/>
            <person name="Golightly E.J."/>
            <person name="Grandi G."/>
            <person name="Guiseppi G."/>
            <person name="Guy B.J."/>
            <person name="Haga K."/>
            <person name="Haiech J."/>
            <person name="Harwood C.R."/>
            <person name="Henaut A."/>
            <person name="Hilbert H."/>
            <person name="Holsappel S."/>
            <person name="Hosono S."/>
            <person name="Hullo M.-F."/>
            <person name="Itaya M."/>
            <person name="Jones L.-M."/>
            <person name="Joris B."/>
            <person name="Karamata D."/>
            <person name="Kasahara Y."/>
            <person name="Klaerr-Blanchard M."/>
            <person name="Klein C."/>
            <person name="Kobayashi Y."/>
            <person name="Koetter P."/>
            <person name="Koningstein G."/>
            <person name="Krogh S."/>
            <person name="Kumano M."/>
            <person name="Kurita K."/>
            <person name="Lapidus A."/>
            <person name="Lardinois S."/>
            <person name="Lauber J."/>
            <person name="Lazarevic V."/>
            <person name="Lee S.-M."/>
            <person name="Levine A."/>
            <person name="Liu H."/>
            <person name="Masuda S."/>
            <person name="Mauel C."/>
            <person name="Medigue C."/>
            <person name="Medina N."/>
            <person name="Mellado R.P."/>
            <person name="Mizuno M."/>
            <person name="Moestl D."/>
            <person name="Nakai S."/>
            <person name="Noback M."/>
            <person name="Noone D."/>
            <person name="O'Reilly M."/>
            <person name="Ogawa K."/>
            <person name="Ogiwara A."/>
            <person name="Oudega B."/>
            <person name="Park S.-H."/>
            <person name="Parro V."/>
            <person name="Pohl T.M."/>
            <person name="Portetelle D."/>
            <person name="Porwollik S."/>
            <person name="Prescott A.M."/>
            <person name="Presecan E."/>
            <person name="Pujic P."/>
            <person name="Purnelle B."/>
            <person name="Rapoport G."/>
            <person name="Rey M."/>
            <person name="Reynolds S."/>
            <person name="Rieger M."/>
            <person name="Rivolta C."/>
            <person name="Rocha E."/>
            <person name="Roche B."/>
            <person name="Rose M."/>
            <person name="Sadaie Y."/>
            <person name="Sato T."/>
            <person name="Scanlan E."/>
            <person name="Schleich S."/>
            <person name="Schroeter R."/>
            <person name="Scoffone F."/>
            <person name="Sekiguchi J."/>
            <person name="Sekowska A."/>
            <person name="Seror S.J."/>
            <person name="Serror P."/>
            <person name="Shin B.-S."/>
            <person name="Soldo B."/>
            <person name="Sorokin A."/>
            <person name="Tacconi E."/>
            <person name="Takagi T."/>
            <person name="Takahashi H."/>
            <person name="Takemaru K."/>
            <person name="Takeuchi M."/>
            <person name="Tamakoshi A."/>
            <person name="Tanaka T."/>
            <person name="Terpstra P."/>
            <person name="Tognoni A."/>
            <person name="Tosato V."/>
            <person name="Uchiyama S."/>
            <person name="Vandenbol M."/>
            <person name="Vannier F."/>
            <person name="Vassarotti A."/>
            <person name="Viari A."/>
            <person name="Wambutt R."/>
            <person name="Wedler E."/>
            <person name="Wedler H."/>
            <person name="Weitzenegger T."/>
            <person name="Winters P."/>
            <person name="Wipat A."/>
            <person name="Yamamoto H."/>
            <person name="Yamane K."/>
            <person name="Yasumoto K."/>
            <person name="Yata K."/>
            <person name="Yoshida K."/>
            <person name="Yoshikawa H.-F."/>
            <person name="Zumstein E."/>
            <person name="Yoshikawa H."/>
            <person name="Danchin A."/>
        </authorList>
    </citation>
    <scope>NUCLEOTIDE SEQUENCE [LARGE SCALE GENOMIC DNA]</scope>
    <source>
        <strain>168</strain>
    </source>
</reference>
<reference key="3">
    <citation type="journal article" date="2002" name="Proteomics">
        <title>Stabilization of cell wall proteins in Bacillus subtilis: a proteomic approach.</title>
        <authorList>
            <person name="Antelmann H."/>
            <person name="Yamamoto H."/>
            <person name="Sekiguchi J."/>
            <person name="Hecker M."/>
        </authorList>
    </citation>
    <scope>SUBCELLULAR LOCATION</scope>
    <scope>INDUCTION</scope>
    <scope>IDENTIFICATION BY MASS SPECTROMETRY</scope>
    <source>
        <strain>168</strain>
    </source>
</reference>
<reference key="4">
    <citation type="journal article" date="2003" name="Mol. Microbiol.">
        <title>Genes controlled by the essential YycG/YycF two-component system of Bacillus subtilis revealed through a novel hybrid regulator approach.</title>
        <authorList>
            <person name="Howell A."/>
            <person name="Dubrac S."/>
            <person name="Andersen K.K."/>
            <person name="Noone D."/>
            <person name="Fert J."/>
            <person name="Msadek T."/>
            <person name="Devine K."/>
        </authorList>
    </citation>
    <scope>REGULATION BY WALR/WALK</scope>
</reference>
<protein>
    <recommendedName>
        <fullName>Cell wall-binding protein YocH</fullName>
    </recommendedName>
</protein>
<comment type="subcellular location">
    <subcellularLocation>
        <location evidence="3">Secreted</location>
        <location evidence="3">Cell wall</location>
    </subcellularLocation>
    <text>Released into the medium.</text>
</comment>
<comment type="induction">
    <text evidence="3 4">Positively regulated by WalR. Expressed primarily during exponential growth, with levels decreasing rapidly at the beginning of the stationary phase.</text>
</comment>
<keyword id="KW-0134">Cell wall</keyword>
<keyword id="KW-1185">Reference proteome</keyword>
<keyword id="KW-0677">Repeat</keyword>
<keyword id="KW-0964">Secreted</keyword>
<keyword id="KW-0732">Signal</keyword>
<evidence type="ECO:0000255" key="1">
    <source>
        <dbReference type="PROSITE-ProRule" id="PRU01118"/>
    </source>
</evidence>
<evidence type="ECO:0000256" key="2">
    <source>
        <dbReference type="SAM" id="MobiDB-lite"/>
    </source>
</evidence>
<evidence type="ECO:0000269" key="3">
    <source>
    </source>
</evidence>
<evidence type="ECO:0000269" key="4">
    <source>
    </source>
</evidence>
<evidence type="ECO:0000305" key="5"/>
<feature type="signal peptide" evidence="5">
    <location>
        <begin position="1"/>
        <end position="25"/>
    </location>
</feature>
<feature type="chain" id="PRO_0000013720" description="Cell wall-binding protein YocH">
    <location>
        <begin position="26"/>
        <end position="287"/>
    </location>
</feature>
<feature type="domain" description="LysM 1" evidence="1">
    <location>
        <begin position="26"/>
        <end position="69"/>
    </location>
</feature>
<feature type="domain" description="LysM 2" evidence="1">
    <location>
        <begin position="78"/>
        <end position="121"/>
    </location>
</feature>
<feature type="region of interest" description="Disordered" evidence="2">
    <location>
        <begin position="130"/>
        <end position="193"/>
    </location>
</feature>
<feature type="compositionally biased region" description="Low complexity" evidence="2">
    <location>
        <begin position="130"/>
        <end position="143"/>
    </location>
</feature>
<feature type="compositionally biased region" description="Basic and acidic residues" evidence="2">
    <location>
        <begin position="165"/>
        <end position="181"/>
    </location>
</feature>
<feature type="compositionally biased region" description="Polar residues" evidence="2">
    <location>
        <begin position="182"/>
        <end position="193"/>
    </location>
</feature>
<sequence>MKKTIMSFVAVAALSTTAFGAHASAKEITVQKGDTLWGISQKNGVNLKDLKEWNKLTSDKIIAGEKLTISSEETTTTGQYTIKAGDTLSKIAQKFGTTVNNLKVWNNLSSDMIYAGSTLSVKGQATAANTATENAQTNAPQAAPKQEAVQKEQPKQEAVQQQPKQETKAEAETSVNTEEKAVQSNTNNQEASKELTVTATAYTANDGGISGVTATGIDLNKNPNAKVIAVDPNVIPLGSKVYVEGYGEATAADTGGAIKGNKIDVFVPSKSDASNWGVKTVSVKVLN</sequence>
<gene>
    <name type="primary">yocH</name>
    <name type="ordered locus">BSU19210</name>
</gene>
<accession>O34669</accession>
<accession>Q796C6</accession>